<feature type="chain" id="PRO_1000122272" description="Large ribosomal subunit protein bL20">
    <location>
        <begin position="1"/>
        <end position="118"/>
    </location>
</feature>
<sequence>MPRVKGGTVTRQRRKKVIKLAKGYYGSKNTLFKVANQQVMKSLMYAFRDRRQKKRDFRKLWITRINAAARMNGLSYSRLMHGLKNAGIEVNRKMLADLAVHDEKAFAELATVAKNNIN</sequence>
<reference key="1">
    <citation type="submission" date="2008-10" db="EMBL/GenBank/DDBJ databases">
        <title>Genome sequence of Bacillus cereus B4264.</title>
        <authorList>
            <person name="Dodson R.J."/>
            <person name="Durkin A.S."/>
            <person name="Rosovitz M.J."/>
            <person name="Rasko D.A."/>
            <person name="Hoffmaster A."/>
            <person name="Ravel J."/>
            <person name="Sutton G."/>
        </authorList>
    </citation>
    <scope>NUCLEOTIDE SEQUENCE [LARGE SCALE GENOMIC DNA]</scope>
    <source>
        <strain>B4264</strain>
    </source>
</reference>
<keyword id="KW-0687">Ribonucleoprotein</keyword>
<keyword id="KW-0689">Ribosomal protein</keyword>
<keyword id="KW-0694">RNA-binding</keyword>
<keyword id="KW-0699">rRNA-binding</keyword>
<evidence type="ECO:0000255" key="1">
    <source>
        <dbReference type="HAMAP-Rule" id="MF_00382"/>
    </source>
</evidence>
<evidence type="ECO:0000305" key="2"/>
<accession>B7HF86</accession>
<gene>
    <name evidence="1" type="primary">rplT</name>
    <name type="ordered locus">BCB4264_A4681</name>
</gene>
<organism>
    <name type="scientific">Bacillus cereus (strain B4264)</name>
    <dbReference type="NCBI Taxonomy" id="405532"/>
    <lineage>
        <taxon>Bacteria</taxon>
        <taxon>Bacillati</taxon>
        <taxon>Bacillota</taxon>
        <taxon>Bacilli</taxon>
        <taxon>Bacillales</taxon>
        <taxon>Bacillaceae</taxon>
        <taxon>Bacillus</taxon>
        <taxon>Bacillus cereus group</taxon>
    </lineage>
</organism>
<comment type="function">
    <text evidence="1">Binds directly to 23S ribosomal RNA and is necessary for the in vitro assembly process of the 50S ribosomal subunit. It is not involved in the protein synthesizing functions of that subunit.</text>
</comment>
<comment type="similarity">
    <text evidence="1">Belongs to the bacterial ribosomal protein bL20 family.</text>
</comment>
<dbReference type="EMBL" id="CP001176">
    <property type="protein sequence ID" value="ACK62665.1"/>
    <property type="molecule type" value="Genomic_DNA"/>
</dbReference>
<dbReference type="RefSeq" id="WP_001138362.1">
    <property type="nucleotide sequence ID" value="NZ_VEHB01000005.1"/>
</dbReference>
<dbReference type="SMR" id="B7HF86"/>
<dbReference type="GeneID" id="93006537"/>
<dbReference type="KEGG" id="bcb:BCB4264_A4681"/>
<dbReference type="HOGENOM" id="CLU_123265_0_1_9"/>
<dbReference type="Proteomes" id="UP000007096">
    <property type="component" value="Chromosome"/>
</dbReference>
<dbReference type="GO" id="GO:1990904">
    <property type="term" value="C:ribonucleoprotein complex"/>
    <property type="evidence" value="ECO:0007669"/>
    <property type="project" value="UniProtKB-KW"/>
</dbReference>
<dbReference type="GO" id="GO:0005840">
    <property type="term" value="C:ribosome"/>
    <property type="evidence" value="ECO:0007669"/>
    <property type="project" value="UniProtKB-KW"/>
</dbReference>
<dbReference type="GO" id="GO:0019843">
    <property type="term" value="F:rRNA binding"/>
    <property type="evidence" value="ECO:0007669"/>
    <property type="project" value="UniProtKB-UniRule"/>
</dbReference>
<dbReference type="GO" id="GO:0003735">
    <property type="term" value="F:structural constituent of ribosome"/>
    <property type="evidence" value="ECO:0007669"/>
    <property type="project" value="InterPro"/>
</dbReference>
<dbReference type="GO" id="GO:0000027">
    <property type="term" value="P:ribosomal large subunit assembly"/>
    <property type="evidence" value="ECO:0007669"/>
    <property type="project" value="UniProtKB-UniRule"/>
</dbReference>
<dbReference type="GO" id="GO:0006412">
    <property type="term" value="P:translation"/>
    <property type="evidence" value="ECO:0007669"/>
    <property type="project" value="InterPro"/>
</dbReference>
<dbReference type="CDD" id="cd07026">
    <property type="entry name" value="Ribosomal_L20"/>
    <property type="match status" value="1"/>
</dbReference>
<dbReference type="FunFam" id="1.10.1900.20:FF:000001">
    <property type="entry name" value="50S ribosomal protein L20"/>
    <property type="match status" value="1"/>
</dbReference>
<dbReference type="Gene3D" id="6.10.160.10">
    <property type="match status" value="1"/>
</dbReference>
<dbReference type="Gene3D" id="1.10.1900.20">
    <property type="entry name" value="Ribosomal protein L20"/>
    <property type="match status" value="1"/>
</dbReference>
<dbReference type="HAMAP" id="MF_00382">
    <property type="entry name" value="Ribosomal_bL20"/>
    <property type="match status" value="1"/>
</dbReference>
<dbReference type="InterPro" id="IPR005813">
    <property type="entry name" value="Ribosomal_bL20"/>
</dbReference>
<dbReference type="InterPro" id="IPR049946">
    <property type="entry name" value="RIBOSOMAL_L20_CS"/>
</dbReference>
<dbReference type="InterPro" id="IPR035566">
    <property type="entry name" value="Ribosomal_protein_bL20_C"/>
</dbReference>
<dbReference type="NCBIfam" id="TIGR01032">
    <property type="entry name" value="rplT_bact"/>
    <property type="match status" value="1"/>
</dbReference>
<dbReference type="PANTHER" id="PTHR10986">
    <property type="entry name" value="39S RIBOSOMAL PROTEIN L20"/>
    <property type="match status" value="1"/>
</dbReference>
<dbReference type="Pfam" id="PF00453">
    <property type="entry name" value="Ribosomal_L20"/>
    <property type="match status" value="1"/>
</dbReference>
<dbReference type="PRINTS" id="PR00062">
    <property type="entry name" value="RIBOSOMALL20"/>
</dbReference>
<dbReference type="SUPFAM" id="SSF74731">
    <property type="entry name" value="Ribosomal protein L20"/>
    <property type="match status" value="1"/>
</dbReference>
<dbReference type="PROSITE" id="PS00937">
    <property type="entry name" value="RIBOSOMAL_L20"/>
    <property type="match status" value="1"/>
</dbReference>
<name>RL20_BACC4</name>
<proteinExistence type="inferred from homology"/>
<protein>
    <recommendedName>
        <fullName evidence="1">Large ribosomal subunit protein bL20</fullName>
    </recommendedName>
    <alternativeName>
        <fullName evidence="2">50S ribosomal protein L20</fullName>
    </alternativeName>
</protein>